<feature type="chain" id="PRO_1000009983" description="DNA mismatch repair protein MutL">
    <location>
        <begin position="1"/>
        <end position="654"/>
    </location>
</feature>
<feature type="region of interest" description="Disordered" evidence="2">
    <location>
        <begin position="358"/>
        <end position="437"/>
    </location>
</feature>
<feature type="compositionally biased region" description="Polar residues" evidence="2">
    <location>
        <begin position="384"/>
        <end position="394"/>
    </location>
</feature>
<feature type="compositionally biased region" description="Basic and acidic residues" evidence="2">
    <location>
        <begin position="413"/>
        <end position="434"/>
    </location>
</feature>
<comment type="function">
    <text evidence="1">This protein is involved in the repair of mismatches in DNA. It is required for dam-dependent methyl-directed DNA mismatch repair. May act as a 'molecular matchmaker', a protein that promotes the formation of a stable complex between two or more DNA-binding proteins in an ATP-dependent manner without itself being part of a final effector complex.</text>
</comment>
<comment type="similarity">
    <text evidence="1">Belongs to the DNA mismatch repair MutL/HexB family.</text>
</comment>
<dbReference type="EMBL" id="AP006627">
    <property type="protein sequence ID" value="BAD64721.1"/>
    <property type="molecule type" value="Genomic_DNA"/>
</dbReference>
<dbReference type="RefSeq" id="WP_011247029.1">
    <property type="nucleotide sequence ID" value="NC_006582.1"/>
</dbReference>
<dbReference type="SMR" id="Q5WFY4"/>
<dbReference type="STRING" id="66692.ABC2186"/>
<dbReference type="KEGG" id="bcl:ABC2186"/>
<dbReference type="eggNOG" id="COG0323">
    <property type="taxonomic scope" value="Bacteria"/>
</dbReference>
<dbReference type="HOGENOM" id="CLU_004131_4_1_9"/>
<dbReference type="OrthoDB" id="9763467at2"/>
<dbReference type="Proteomes" id="UP000001168">
    <property type="component" value="Chromosome"/>
</dbReference>
<dbReference type="GO" id="GO:0032300">
    <property type="term" value="C:mismatch repair complex"/>
    <property type="evidence" value="ECO:0007669"/>
    <property type="project" value="InterPro"/>
</dbReference>
<dbReference type="GO" id="GO:0005524">
    <property type="term" value="F:ATP binding"/>
    <property type="evidence" value="ECO:0007669"/>
    <property type="project" value="InterPro"/>
</dbReference>
<dbReference type="GO" id="GO:0016887">
    <property type="term" value="F:ATP hydrolysis activity"/>
    <property type="evidence" value="ECO:0007669"/>
    <property type="project" value="InterPro"/>
</dbReference>
<dbReference type="GO" id="GO:0140664">
    <property type="term" value="F:ATP-dependent DNA damage sensor activity"/>
    <property type="evidence" value="ECO:0007669"/>
    <property type="project" value="InterPro"/>
</dbReference>
<dbReference type="GO" id="GO:0030983">
    <property type="term" value="F:mismatched DNA binding"/>
    <property type="evidence" value="ECO:0007669"/>
    <property type="project" value="InterPro"/>
</dbReference>
<dbReference type="GO" id="GO:0006298">
    <property type="term" value="P:mismatch repair"/>
    <property type="evidence" value="ECO:0007669"/>
    <property type="project" value="UniProtKB-UniRule"/>
</dbReference>
<dbReference type="CDD" id="cd16926">
    <property type="entry name" value="HATPase_MutL-MLH-PMS-like"/>
    <property type="match status" value="1"/>
</dbReference>
<dbReference type="CDD" id="cd00782">
    <property type="entry name" value="MutL_Trans"/>
    <property type="match status" value="1"/>
</dbReference>
<dbReference type="FunFam" id="3.30.1370.100:FF:000004">
    <property type="entry name" value="DNA mismatch repair endonuclease MutL"/>
    <property type="match status" value="1"/>
</dbReference>
<dbReference type="FunFam" id="3.30.565.10:FF:000003">
    <property type="entry name" value="DNA mismatch repair endonuclease MutL"/>
    <property type="match status" value="1"/>
</dbReference>
<dbReference type="Gene3D" id="3.30.230.10">
    <property type="match status" value="1"/>
</dbReference>
<dbReference type="Gene3D" id="3.30.565.10">
    <property type="entry name" value="Histidine kinase-like ATPase, C-terminal domain"/>
    <property type="match status" value="1"/>
</dbReference>
<dbReference type="Gene3D" id="3.30.1540.20">
    <property type="entry name" value="MutL, C-terminal domain, dimerisation subdomain"/>
    <property type="match status" value="1"/>
</dbReference>
<dbReference type="Gene3D" id="3.30.1370.100">
    <property type="entry name" value="MutL, C-terminal domain, regulatory subdomain"/>
    <property type="match status" value="1"/>
</dbReference>
<dbReference type="HAMAP" id="MF_00149">
    <property type="entry name" value="DNA_mis_repair"/>
    <property type="match status" value="1"/>
</dbReference>
<dbReference type="InterPro" id="IPR014762">
    <property type="entry name" value="DNA_mismatch_repair_CS"/>
</dbReference>
<dbReference type="InterPro" id="IPR020667">
    <property type="entry name" value="DNA_mismatch_repair_MutL"/>
</dbReference>
<dbReference type="InterPro" id="IPR013507">
    <property type="entry name" value="DNA_mismatch_S5_2-like"/>
</dbReference>
<dbReference type="InterPro" id="IPR036890">
    <property type="entry name" value="HATPase_C_sf"/>
</dbReference>
<dbReference type="InterPro" id="IPR002099">
    <property type="entry name" value="MutL/Mlh/PMS"/>
</dbReference>
<dbReference type="InterPro" id="IPR038973">
    <property type="entry name" value="MutL/Mlh/Pms-like"/>
</dbReference>
<dbReference type="InterPro" id="IPR014790">
    <property type="entry name" value="MutL_C"/>
</dbReference>
<dbReference type="InterPro" id="IPR042120">
    <property type="entry name" value="MutL_C_dimsub"/>
</dbReference>
<dbReference type="InterPro" id="IPR042121">
    <property type="entry name" value="MutL_C_regsub"/>
</dbReference>
<dbReference type="InterPro" id="IPR037198">
    <property type="entry name" value="MutL_C_sf"/>
</dbReference>
<dbReference type="InterPro" id="IPR020568">
    <property type="entry name" value="Ribosomal_Su5_D2-typ_SF"/>
</dbReference>
<dbReference type="InterPro" id="IPR014721">
    <property type="entry name" value="Ribsml_uS5_D2-typ_fold_subgr"/>
</dbReference>
<dbReference type="NCBIfam" id="TIGR00585">
    <property type="entry name" value="mutl"/>
    <property type="match status" value="1"/>
</dbReference>
<dbReference type="NCBIfam" id="NF000950">
    <property type="entry name" value="PRK00095.1-3"/>
    <property type="match status" value="1"/>
</dbReference>
<dbReference type="PANTHER" id="PTHR10073">
    <property type="entry name" value="DNA MISMATCH REPAIR PROTEIN MLH, PMS, MUTL"/>
    <property type="match status" value="1"/>
</dbReference>
<dbReference type="PANTHER" id="PTHR10073:SF12">
    <property type="entry name" value="DNA MISMATCH REPAIR PROTEIN MLH1"/>
    <property type="match status" value="1"/>
</dbReference>
<dbReference type="Pfam" id="PF01119">
    <property type="entry name" value="DNA_mis_repair"/>
    <property type="match status" value="1"/>
</dbReference>
<dbReference type="Pfam" id="PF13589">
    <property type="entry name" value="HATPase_c_3"/>
    <property type="match status" value="1"/>
</dbReference>
<dbReference type="Pfam" id="PF08676">
    <property type="entry name" value="MutL_C"/>
    <property type="match status" value="1"/>
</dbReference>
<dbReference type="SMART" id="SM01340">
    <property type="entry name" value="DNA_mis_repair"/>
    <property type="match status" value="1"/>
</dbReference>
<dbReference type="SMART" id="SM00853">
    <property type="entry name" value="MutL_C"/>
    <property type="match status" value="1"/>
</dbReference>
<dbReference type="SUPFAM" id="SSF55874">
    <property type="entry name" value="ATPase domain of HSP90 chaperone/DNA topoisomerase II/histidine kinase"/>
    <property type="match status" value="1"/>
</dbReference>
<dbReference type="SUPFAM" id="SSF118116">
    <property type="entry name" value="DNA mismatch repair protein MutL"/>
    <property type="match status" value="1"/>
</dbReference>
<dbReference type="SUPFAM" id="SSF54211">
    <property type="entry name" value="Ribosomal protein S5 domain 2-like"/>
    <property type="match status" value="1"/>
</dbReference>
<dbReference type="PROSITE" id="PS00058">
    <property type="entry name" value="DNA_MISMATCH_REPAIR_1"/>
    <property type="match status" value="1"/>
</dbReference>
<keyword id="KW-0227">DNA damage</keyword>
<keyword id="KW-0234">DNA repair</keyword>
<keyword id="KW-1185">Reference proteome</keyword>
<gene>
    <name evidence="1" type="primary">mutL</name>
    <name type="ordered locus">ABC2186</name>
</gene>
<reference key="1">
    <citation type="submission" date="2003-10" db="EMBL/GenBank/DDBJ databases">
        <title>The complete genome sequence of the alkaliphilic Bacillus clausii KSM-K16.</title>
        <authorList>
            <person name="Takaki Y."/>
            <person name="Kageyama Y."/>
            <person name="Shimamura S."/>
            <person name="Suzuki H."/>
            <person name="Nishi S."/>
            <person name="Hatada Y."/>
            <person name="Kawai S."/>
            <person name="Ito S."/>
            <person name="Horikoshi K."/>
        </authorList>
    </citation>
    <scope>NUCLEOTIDE SEQUENCE [LARGE SCALE GENOMIC DNA]</scope>
    <source>
        <strain>KSM-K16</strain>
    </source>
</reference>
<accession>Q5WFY4</accession>
<name>MUTL_SHOC1</name>
<proteinExistence type="inferred from homology"/>
<evidence type="ECO:0000255" key="1">
    <source>
        <dbReference type="HAMAP-Rule" id="MF_00149"/>
    </source>
</evidence>
<evidence type="ECO:0000256" key="2">
    <source>
        <dbReference type="SAM" id="MobiDB-lite"/>
    </source>
</evidence>
<organism>
    <name type="scientific">Shouchella clausii (strain KSM-K16)</name>
    <name type="common">Alkalihalobacillus clausii</name>
    <dbReference type="NCBI Taxonomy" id="66692"/>
    <lineage>
        <taxon>Bacteria</taxon>
        <taxon>Bacillati</taxon>
        <taxon>Bacillota</taxon>
        <taxon>Bacilli</taxon>
        <taxon>Bacillales</taxon>
        <taxon>Bacillaceae</taxon>
        <taxon>Shouchella</taxon>
    </lineage>
</organism>
<sequence>MAVIQQLDDALSNKIAAGEVVERPASIVKELVENAIDANSSQILVEIEEGGLSSIRIVDNGTGIEPNELELAFSRHATSKIKTDRDLFTICTLGFRGEALPSIASVSRVNMQTSTGSAGMQVELEGGKIVHKQPSEARKGTTIVVTDLFYNTPARLKYLKTVLTEAGHVSEVMNRMALAYPHIRFHYVSDGKTVLKTAGNGDLRQVIAQVYGRKTAEKMVPITGSSLDYELRGYIAKPELTRANRQYMSIFINGRYIRNFKLAKAIQQGFHTKLPIGRFPIAVLKLEMDPTLIDVNVHPAKLEVRLSKEEALSEMIAESIKKALSEETLIPEPKKENTAKTKSEQLSFSLAYELQPEKEHVRETMQQPRQLAADDQVDRKKESTSIGNSWSPSHQQEEEVEQGRGSNASIPPRNERVETNTEEKYEQADRRTDESLPMEMEEEAAVVEPQLPLGNDAEAKGAMPPLYPVGQMHGTYIVAQNEQGMYLIDQHAAQERIKYEHFHQKLAEPLGQTQELLVPITLELTTRETLVVTESKEKLEAVGVFLEEFGKNTFVVRSHPTWFPQGDEESTIREMVEQLLDNKRISIGELREEAAIMMSCKAAIKANRHLRTDEMFQLLETLRRCQEPYTCPHGRPVVIHFSTYELEKMFKRVM</sequence>
<protein>
    <recommendedName>
        <fullName evidence="1">DNA mismatch repair protein MutL</fullName>
    </recommendedName>
</protein>